<evidence type="ECO:0000255" key="1">
    <source>
        <dbReference type="HAMAP-Rule" id="MF_01717"/>
    </source>
</evidence>
<gene>
    <name evidence="1" type="primary">mglA</name>
    <name type="ordered locus">VV2_1325</name>
</gene>
<protein>
    <recommendedName>
        <fullName evidence="1">Galactose/methyl galactoside import ATP-binding protein MglA</fullName>
        <ecNumber evidence="1">7.5.2.11</ecNumber>
    </recommendedName>
</protein>
<reference key="1">
    <citation type="submission" date="2002-12" db="EMBL/GenBank/DDBJ databases">
        <title>Complete genome sequence of Vibrio vulnificus CMCP6.</title>
        <authorList>
            <person name="Rhee J.H."/>
            <person name="Kim S.Y."/>
            <person name="Chung S.S."/>
            <person name="Kim J.J."/>
            <person name="Moon Y.H."/>
            <person name="Jeong H."/>
            <person name="Choy H.E."/>
        </authorList>
    </citation>
    <scope>NUCLEOTIDE SEQUENCE [LARGE SCALE GENOMIC DNA]</scope>
    <source>
        <strain>CMCP6</strain>
    </source>
</reference>
<comment type="function">
    <text evidence="1">Part of the ABC transporter complex MglABC involved in galactose/methyl galactoside import. Responsible for energy coupling to the transport system.</text>
</comment>
<comment type="catalytic activity">
    <reaction evidence="1">
        <text>D-galactose(out) + ATP + H2O = D-galactose(in) + ADP + phosphate + H(+)</text>
        <dbReference type="Rhea" id="RHEA:60156"/>
        <dbReference type="ChEBI" id="CHEBI:4139"/>
        <dbReference type="ChEBI" id="CHEBI:15377"/>
        <dbReference type="ChEBI" id="CHEBI:15378"/>
        <dbReference type="ChEBI" id="CHEBI:30616"/>
        <dbReference type="ChEBI" id="CHEBI:43474"/>
        <dbReference type="ChEBI" id="CHEBI:456216"/>
        <dbReference type="EC" id="7.5.2.11"/>
    </reaction>
    <physiologicalReaction direction="left-to-right" evidence="1">
        <dbReference type="Rhea" id="RHEA:60157"/>
    </physiologicalReaction>
</comment>
<comment type="catalytic activity">
    <reaction evidence="1">
        <text>methyl beta-D-galactoside(out) + ATP + H2O = methyl beta-D-galactoside(in) + ADP + phosphate + H(+)</text>
        <dbReference type="Rhea" id="RHEA:72531"/>
        <dbReference type="ChEBI" id="CHEBI:15377"/>
        <dbReference type="ChEBI" id="CHEBI:15378"/>
        <dbReference type="ChEBI" id="CHEBI:17540"/>
        <dbReference type="ChEBI" id="CHEBI:30616"/>
        <dbReference type="ChEBI" id="CHEBI:43474"/>
        <dbReference type="ChEBI" id="CHEBI:456216"/>
    </reaction>
    <physiologicalReaction direction="left-to-right" evidence="1">
        <dbReference type="Rhea" id="RHEA:72532"/>
    </physiologicalReaction>
</comment>
<comment type="subunit">
    <text evidence="1">The complex is composed of one ATP-binding protein (MglA), two transmembrane proteins (MglC) and a solute-binding protein (MglB).</text>
</comment>
<comment type="subcellular location">
    <subcellularLocation>
        <location evidence="1">Cell inner membrane</location>
        <topology evidence="1">Peripheral membrane protein</topology>
    </subcellularLocation>
</comment>
<comment type="similarity">
    <text evidence="1">Belongs to the ABC transporter superfamily. Galactose/methyl galactoside importer (TC 3.A.1.2.3) family.</text>
</comment>
<organism>
    <name type="scientific">Vibrio vulnificus (strain CMCP6)</name>
    <dbReference type="NCBI Taxonomy" id="216895"/>
    <lineage>
        <taxon>Bacteria</taxon>
        <taxon>Pseudomonadati</taxon>
        <taxon>Pseudomonadota</taxon>
        <taxon>Gammaproteobacteria</taxon>
        <taxon>Vibrionales</taxon>
        <taxon>Vibrionaceae</taxon>
        <taxon>Vibrio</taxon>
    </lineage>
</organism>
<dbReference type="EC" id="7.5.2.11" evidence="1"/>
<dbReference type="EMBL" id="AE016796">
    <property type="protein sequence ID" value="AAO08213.2"/>
    <property type="molecule type" value="Genomic_DNA"/>
</dbReference>
<dbReference type="RefSeq" id="WP_011082208.1">
    <property type="nucleotide sequence ID" value="NC_004460.2"/>
</dbReference>
<dbReference type="SMR" id="Q8D4H4"/>
<dbReference type="KEGG" id="vvu:VV2_1325"/>
<dbReference type="HOGENOM" id="CLU_000604_92_3_6"/>
<dbReference type="Proteomes" id="UP000002275">
    <property type="component" value="Chromosome 2"/>
</dbReference>
<dbReference type="GO" id="GO:0005886">
    <property type="term" value="C:plasma membrane"/>
    <property type="evidence" value="ECO:0007669"/>
    <property type="project" value="UniProtKB-SubCell"/>
</dbReference>
<dbReference type="GO" id="GO:0005524">
    <property type="term" value="F:ATP binding"/>
    <property type="evidence" value="ECO:0007669"/>
    <property type="project" value="UniProtKB-KW"/>
</dbReference>
<dbReference type="GO" id="GO:0016887">
    <property type="term" value="F:ATP hydrolysis activity"/>
    <property type="evidence" value="ECO:0007669"/>
    <property type="project" value="InterPro"/>
</dbReference>
<dbReference type="CDD" id="cd03216">
    <property type="entry name" value="ABC_Carb_Monos_I"/>
    <property type="match status" value="1"/>
</dbReference>
<dbReference type="CDD" id="cd03215">
    <property type="entry name" value="ABC_Carb_Monos_II"/>
    <property type="match status" value="1"/>
</dbReference>
<dbReference type="FunFam" id="3.40.50.300:FF:000126">
    <property type="entry name" value="Galactose/methyl galactoside import ATP-binding protein MglA"/>
    <property type="match status" value="1"/>
</dbReference>
<dbReference type="FunFam" id="3.40.50.300:FF:000127">
    <property type="entry name" value="Ribose import ATP-binding protein RbsA"/>
    <property type="match status" value="1"/>
</dbReference>
<dbReference type="Gene3D" id="3.40.50.300">
    <property type="entry name" value="P-loop containing nucleotide triphosphate hydrolases"/>
    <property type="match status" value="2"/>
</dbReference>
<dbReference type="InterPro" id="IPR003593">
    <property type="entry name" value="AAA+_ATPase"/>
</dbReference>
<dbReference type="InterPro" id="IPR050107">
    <property type="entry name" value="ABC_carbohydrate_import_ATPase"/>
</dbReference>
<dbReference type="InterPro" id="IPR003439">
    <property type="entry name" value="ABC_transporter-like_ATP-bd"/>
</dbReference>
<dbReference type="InterPro" id="IPR017871">
    <property type="entry name" value="ABC_transporter-like_CS"/>
</dbReference>
<dbReference type="InterPro" id="IPR027417">
    <property type="entry name" value="P-loop_NTPase"/>
</dbReference>
<dbReference type="NCBIfam" id="NF008215">
    <property type="entry name" value="PRK10982.1"/>
    <property type="match status" value="1"/>
</dbReference>
<dbReference type="PANTHER" id="PTHR43790">
    <property type="entry name" value="CARBOHYDRATE TRANSPORT ATP-BINDING PROTEIN MG119-RELATED"/>
    <property type="match status" value="1"/>
</dbReference>
<dbReference type="PANTHER" id="PTHR43790:SF7">
    <property type="entry name" value="GALACTOSE_METHYL GALACTOSIDE IMPORT ATP-BINDING PROTEIN MGLA"/>
    <property type="match status" value="1"/>
</dbReference>
<dbReference type="Pfam" id="PF00005">
    <property type="entry name" value="ABC_tran"/>
    <property type="match status" value="2"/>
</dbReference>
<dbReference type="SMART" id="SM00382">
    <property type="entry name" value="AAA"/>
    <property type="match status" value="2"/>
</dbReference>
<dbReference type="SUPFAM" id="SSF52540">
    <property type="entry name" value="P-loop containing nucleoside triphosphate hydrolases"/>
    <property type="match status" value="2"/>
</dbReference>
<dbReference type="PROSITE" id="PS00211">
    <property type="entry name" value="ABC_TRANSPORTER_1"/>
    <property type="match status" value="1"/>
</dbReference>
<dbReference type="PROSITE" id="PS50893">
    <property type="entry name" value="ABC_TRANSPORTER_2"/>
    <property type="match status" value="2"/>
</dbReference>
<dbReference type="PROSITE" id="PS51260">
    <property type="entry name" value="MGLA"/>
    <property type="match status" value="1"/>
</dbReference>
<sequence length="502" mass="56325">MVNQTHEFLLEMTGVSKEFPGVKALDKVNLNVRPHSIHALMGENGAGKSTLLKCLFGIYEKNEGNILFLGKEVNFTSSKEALESGVSMVHQELNQVKQCSVMDNIWLGRYPKKGFFVDHDKMYRDTKAIFAELDIDIDPKVKVATLSVSQMQMVEIAKAFSYDAKIVIMDEPTSSLTEKEVSHLFTIINKLKEKGCGVVYISHKMEEIFAICDEITILRDGQWVDTRPLKGLDMDQIIAMMVGRELTHRFPEKTNTPKDVILEVENLTALNQPSIQDVSFELKAGEILGVAGLVGSRRTDIVETIFGVRERSEGHIRLHGREMKNRDAHEAINNGFALVTEERRSTGIYGNLDITFNALVANVDEYKTQMGLLSDKKMKSDTQWVIDSMRVKTPSHQTHISSLSGGNQQKVIIGRWLLTQPEILMLDEPTRGIDVGAKFEIYQLILELAKKNKGIIIISSEMPELLGITDRILVMSNGRAAGIVNTKETSQNEILELASRYL</sequence>
<name>MGLA_VIBVU</name>
<accession>Q8D4H4</accession>
<proteinExistence type="inferred from homology"/>
<keyword id="KW-0067">ATP-binding</keyword>
<keyword id="KW-0997">Cell inner membrane</keyword>
<keyword id="KW-1003">Cell membrane</keyword>
<keyword id="KW-0472">Membrane</keyword>
<keyword id="KW-0547">Nucleotide-binding</keyword>
<keyword id="KW-0677">Repeat</keyword>
<keyword id="KW-0762">Sugar transport</keyword>
<keyword id="KW-1278">Translocase</keyword>
<keyword id="KW-0813">Transport</keyword>
<feature type="chain" id="PRO_0000261378" description="Galactose/methyl galactoside import ATP-binding protein MglA">
    <location>
        <begin position="1"/>
        <end position="502"/>
    </location>
</feature>
<feature type="domain" description="ABC transporter 1" evidence="1">
    <location>
        <begin position="10"/>
        <end position="245"/>
    </location>
</feature>
<feature type="domain" description="ABC transporter 2" evidence="1">
    <location>
        <begin position="255"/>
        <end position="502"/>
    </location>
</feature>
<feature type="binding site" evidence="1">
    <location>
        <begin position="42"/>
        <end position="49"/>
    </location>
    <ligand>
        <name>ATP</name>
        <dbReference type="ChEBI" id="CHEBI:30616"/>
    </ligand>
</feature>